<dbReference type="EMBL" id="AF403430">
    <property type="protein sequence ID" value="AAM53261.1"/>
    <property type="molecule type" value="mRNA"/>
</dbReference>
<dbReference type="EMBL" id="AF467770">
    <property type="protein sequence ID" value="AAO33390.1"/>
    <property type="molecule type" value="mRNA"/>
</dbReference>
<dbReference type="EMBL" id="AL118555">
    <property type="status" value="NOT_ANNOTATED_CDS"/>
    <property type="molecule type" value="Genomic_DNA"/>
</dbReference>
<dbReference type="EMBL" id="BC069113">
    <property type="protein sequence ID" value="AAH69113.1"/>
    <property type="molecule type" value="mRNA"/>
</dbReference>
<dbReference type="CCDS" id="CCDS73643.1"/>
<dbReference type="RefSeq" id="NP_660154.3">
    <property type="nucleotide sequence ID" value="NM_145171.3"/>
</dbReference>
<dbReference type="SMR" id="Q86YW7"/>
<dbReference type="BioGRID" id="125802">
    <property type="interactions" value="6"/>
</dbReference>
<dbReference type="ComplexPortal" id="CPX-7802">
    <property type="entry name" value="Thyrostimulin thyroid-stimulating hormone complex"/>
</dbReference>
<dbReference type="FunCoup" id="Q86YW7">
    <property type="interactions" value="563"/>
</dbReference>
<dbReference type="IntAct" id="Q86YW7">
    <property type="interactions" value="9"/>
</dbReference>
<dbReference type="STRING" id="9606.ENSP00000478993"/>
<dbReference type="GlyCosmos" id="Q86YW7">
    <property type="glycosylation" value="1 site, No reported glycans"/>
</dbReference>
<dbReference type="GlyGen" id="Q86YW7">
    <property type="glycosylation" value="1 site"/>
</dbReference>
<dbReference type="BioMuta" id="GPHB5"/>
<dbReference type="DMDM" id="48474403"/>
<dbReference type="PaxDb" id="9606-ENSP00000478993"/>
<dbReference type="Antibodypedia" id="73167">
    <property type="antibodies" value="57 antibodies from 11 providers"/>
</dbReference>
<dbReference type="DNASU" id="122876"/>
<dbReference type="Ensembl" id="ENST00000314140.2">
    <property type="protein sequence ID" value="ENSP00000479431.1"/>
    <property type="gene ID" value="ENSG00000179600.4"/>
</dbReference>
<dbReference type="Ensembl" id="ENST00000621500.2">
    <property type="protein sequence ID" value="ENSP00000478993.1"/>
    <property type="gene ID" value="ENSG00000179600.4"/>
</dbReference>
<dbReference type="GeneID" id="122876"/>
<dbReference type="KEGG" id="hsa:122876"/>
<dbReference type="MANE-Select" id="ENST00000621500.2">
    <property type="protein sequence ID" value="ENSP00000478993.1"/>
    <property type="RefSeq nucleotide sequence ID" value="NM_145171.4"/>
    <property type="RefSeq protein sequence ID" value="NP_660154.3"/>
</dbReference>
<dbReference type="UCSC" id="uc032bdx.1">
    <property type="organism name" value="human"/>
</dbReference>
<dbReference type="AGR" id="HGNC:18055"/>
<dbReference type="CTD" id="122876"/>
<dbReference type="DisGeNET" id="122876"/>
<dbReference type="GeneCards" id="GPHB5"/>
<dbReference type="HGNC" id="HGNC:18055">
    <property type="gene designation" value="GPHB5"/>
</dbReference>
<dbReference type="HPA" id="ENSG00000179600">
    <property type="expression patterns" value="Not detected"/>
</dbReference>
<dbReference type="MIM" id="609652">
    <property type="type" value="gene"/>
</dbReference>
<dbReference type="neXtProt" id="NX_Q86YW7"/>
<dbReference type="OpenTargets" id="ENSG00000179600"/>
<dbReference type="PharmGKB" id="PA134872371"/>
<dbReference type="VEuPathDB" id="HostDB:ENSG00000179600"/>
<dbReference type="eggNOG" id="ENOG502RZ3V">
    <property type="taxonomic scope" value="Eukaryota"/>
</dbReference>
<dbReference type="GeneTree" id="ENSGT00730000111179"/>
<dbReference type="HOGENOM" id="CLU_126319_2_1_1"/>
<dbReference type="InParanoid" id="Q86YW7"/>
<dbReference type="OMA" id="MAVRCDC"/>
<dbReference type="OrthoDB" id="10006958at2759"/>
<dbReference type="PAN-GO" id="Q86YW7">
    <property type="GO annotations" value="4 GO annotations based on evolutionary models"/>
</dbReference>
<dbReference type="PhylomeDB" id="Q86YW7"/>
<dbReference type="PathwayCommons" id="Q86YW7"/>
<dbReference type="Reactome" id="R-HSA-375281">
    <property type="pathway name" value="Hormone ligand-binding receptors"/>
</dbReference>
<dbReference type="Reactome" id="R-HSA-418555">
    <property type="pathway name" value="G alpha (s) signalling events"/>
</dbReference>
<dbReference type="SignaLink" id="Q86YW7"/>
<dbReference type="BioGRID-ORCS" id="122876">
    <property type="hits" value="8 hits in 244 CRISPR screens"/>
</dbReference>
<dbReference type="GeneWiki" id="GPHB5"/>
<dbReference type="GenomeRNAi" id="122876"/>
<dbReference type="Pharos" id="Q86YW7">
    <property type="development level" value="Tbio"/>
</dbReference>
<dbReference type="PRO" id="PR:Q86YW7"/>
<dbReference type="Proteomes" id="UP000005640">
    <property type="component" value="Chromosome 14"/>
</dbReference>
<dbReference type="RNAct" id="Q86YW7">
    <property type="molecule type" value="protein"/>
</dbReference>
<dbReference type="Bgee" id="ENSG00000179600">
    <property type="expression patterns" value="Expressed in primordial germ cell in gonad and 18 other cell types or tissues"/>
</dbReference>
<dbReference type="ExpressionAtlas" id="Q86YW7">
    <property type="expression patterns" value="baseline and differential"/>
</dbReference>
<dbReference type="GO" id="GO:0005737">
    <property type="term" value="C:cytoplasm"/>
    <property type="evidence" value="ECO:0000318"/>
    <property type="project" value="GO_Central"/>
</dbReference>
<dbReference type="GO" id="GO:0005576">
    <property type="term" value="C:extracellular region"/>
    <property type="evidence" value="ECO:0000304"/>
    <property type="project" value="Reactome"/>
</dbReference>
<dbReference type="GO" id="GO:0005615">
    <property type="term" value="C:extracellular space"/>
    <property type="evidence" value="ECO:0000318"/>
    <property type="project" value="GO_Central"/>
</dbReference>
<dbReference type="GO" id="GO:0005179">
    <property type="term" value="F:hormone activity"/>
    <property type="evidence" value="ECO:0007669"/>
    <property type="project" value="UniProtKB-KW"/>
</dbReference>
<dbReference type="GO" id="GO:0046982">
    <property type="term" value="F:protein heterodimerization activity"/>
    <property type="evidence" value="ECO:0000314"/>
    <property type="project" value="UniProtKB"/>
</dbReference>
<dbReference type="GO" id="GO:0031531">
    <property type="term" value="F:thyrotropin-releasing hormone receptor binding"/>
    <property type="evidence" value="ECO:0000315"/>
    <property type="project" value="UniProtKB"/>
</dbReference>
<dbReference type="GO" id="GO:0007189">
    <property type="term" value="P:adenylate cyclase-activating G protein-coupled receptor signaling pathway"/>
    <property type="evidence" value="ECO:0000315"/>
    <property type="project" value="UniProtKB"/>
</dbReference>
<dbReference type="GO" id="GO:0007186">
    <property type="term" value="P:G protein-coupled receptor signaling pathway"/>
    <property type="evidence" value="ECO:0000318"/>
    <property type="project" value="GO_Central"/>
</dbReference>
<dbReference type="GO" id="GO:0002155">
    <property type="term" value="P:regulation of thyroid hormone receptor signaling pathway"/>
    <property type="evidence" value="ECO:0000318"/>
    <property type="project" value="GO_Central"/>
</dbReference>
<dbReference type="CDD" id="cd00069">
    <property type="entry name" value="GHB_like"/>
    <property type="match status" value="1"/>
</dbReference>
<dbReference type="FunFam" id="2.10.90.10:FF:000029">
    <property type="entry name" value="glycoprotein hormone beta-5"/>
    <property type="match status" value="1"/>
</dbReference>
<dbReference type="Gene3D" id="2.10.90.10">
    <property type="entry name" value="Cystine-knot cytokines"/>
    <property type="match status" value="1"/>
</dbReference>
<dbReference type="InterPro" id="IPR029034">
    <property type="entry name" value="Cystine-knot_cytokine"/>
</dbReference>
<dbReference type="InterPro" id="IPR006208">
    <property type="entry name" value="Glyco_hormone_CN"/>
</dbReference>
<dbReference type="InterPro" id="IPR001545">
    <property type="entry name" value="Gonadotropin_bsu"/>
</dbReference>
<dbReference type="PANTHER" id="PTHR11515">
    <property type="entry name" value="GLYCOPROTEIN HORMONE BETA CHAIN"/>
    <property type="match status" value="1"/>
</dbReference>
<dbReference type="PANTHER" id="PTHR11515:SF14">
    <property type="entry name" value="GLYCOPROTEIN HORMONE BETA-5"/>
    <property type="match status" value="1"/>
</dbReference>
<dbReference type="Pfam" id="PF00007">
    <property type="entry name" value="Cys_knot"/>
    <property type="match status" value="1"/>
</dbReference>
<dbReference type="SMART" id="SM00068">
    <property type="entry name" value="GHB"/>
    <property type="match status" value="1"/>
</dbReference>
<dbReference type="SUPFAM" id="SSF57501">
    <property type="entry name" value="Cystine-knot cytokines"/>
    <property type="match status" value="1"/>
</dbReference>
<keyword id="KW-1015">Disulfide bond</keyword>
<keyword id="KW-0325">Glycoprotein</keyword>
<keyword id="KW-0372">Hormone</keyword>
<keyword id="KW-1185">Reference proteome</keyword>
<keyword id="KW-0964">Secreted</keyword>
<keyword id="KW-0732">Signal</keyword>
<protein>
    <recommendedName>
        <fullName>Glycoprotein hormone beta-5</fullName>
    </recommendedName>
    <alternativeName>
        <fullName>Thyrostimulin subunit beta</fullName>
    </alternativeName>
</protein>
<sequence>MKLAFLFLGPMALLLLAGYGCVLGASSGNLRTFVGCAVREFTFLAKKPGCRGLRITTDACWGRCETWEKPILEPPYIEAHHRVCTYNETKQVTVKLPNCAPGVDPFYTYPVAIRCDCGACSTATTECETI</sequence>
<accession>Q86YW7</accession>
<accession>Q6NTD0</accession>
<accession>Q8NFW2</accession>
<reference key="1">
    <citation type="journal article" date="2002" name="J. Clin. Invest.">
        <title>Thyrostimulin, a heterodimer of two new human glycoprotein hormone subunits, activates the thyroid-stimulating hormone receptor.</title>
        <authorList>
            <person name="Nakabayashi K."/>
            <person name="Matsumi H."/>
            <person name="Bhalla A."/>
            <person name="Bae J."/>
            <person name="Mosselman S."/>
            <person name="Hsu S.Y."/>
            <person name="Hsueh A.J.W."/>
        </authorList>
    </citation>
    <scope>NUCLEOTIDE SEQUENCE [MRNA]</scope>
    <scope>FUNCTION</scope>
    <scope>SUBUNIT</scope>
    <scope>INTERACTION WITH TSHR</scope>
    <scope>GLYCOSYLATION</scope>
</reference>
<reference key="2">
    <citation type="submission" date="2002-01" db="EMBL/GenBank/DDBJ databases">
        <title>A novel glycoprotein hormone beta subunit.</title>
        <authorList>
            <person name="Holloway J.L."/>
            <person name="O'Hogan S.L."/>
            <person name="Tackett M."/>
            <person name="Taft D."/>
            <person name="Thayer E.C."/>
            <person name="Webster P."/>
        </authorList>
    </citation>
    <scope>NUCLEOTIDE SEQUENCE [MRNA]</scope>
</reference>
<reference key="3">
    <citation type="journal article" date="2003" name="Nature">
        <title>The DNA sequence and analysis of human chromosome 14.</title>
        <authorList>
            <person name="Heilig R."/>
            <person name="Eckenberg R."/>
            <person name="Petit J.-L."/>
            <person name="Fonknechten N."/>
            <person name="Da Silva C."/>
            <person name="Cattolico L."/>
            <person name="Levy M."/>
            <person name="Barbe V."/>
            <person name="De Berardinis V."/>
            <person name="Ureta-Vidal A."/>
            <person name="Pelletier E."/>
            <person name="Vico V."/>
            <person name="Anthouard V."/>
            <person name="Rowen L."/>
            <person name="Madan A."/>
            <person name="Qin S."/>
            <person name="Sun H."/>
            <person name="Du H."/>
            <person name="Pepin K."/>
            <person name="Artiguenave F."/>
            <person name="Robert C."/>
            <person name="Cruaud C."/>
            <person name="Bruels T."/>
            <person name="Jaillon O."/>
            <person name="Friedlander L."/>
            <person name="Samson G."/>
            <person name="Brottier P."/>
            <person name="Cure S."/>
            <person name="Segurens B."/>
            <person name="Aniere F."/>
            <person name="Samain S."/>
            <person name="Crespeau H."/>
            <person name="Abbasi N."/>
            <person name="Aiach N."/>
            <person name="Boscus D."/>
            <person name="Dickhoff R."/>
            <person name="Dors M."/>
            <person name="Dubois I."/>
            <person name="Friedman C."/>
            <person name="Gouyvenoux M."/>
            <person name="James R."/>
            <person name="Madan A."/>
            <person name="Mairey-Estrada B."/>
            <person name="Mangenot S."/>
            <person name="Martins N."/>
            <person name="Menard M."/>
            <person name="Oztas S."/>
            <person name="Ratcliffe A."/>
            <person name="Shaffer T."/>
            <person name="Trask B."/>
            <person name="Vacherie B."/>
            <person name="Bellemere C."/>
            <person name="Belser C."/>
            <person name="Besnard-Gonnet M."/>
            <person name="Bartol-Mavel D."/>
            <person name="Boutard M."/>
            <person name="Briez-Silla S."/>
            <person name="Combette S."/>
            <person name="Dufosse-Laurent V."/>
            <person name="Ferron C."/>
            <person name="Lechaplais C."/>
            <person name="Louesse C."/>
            <person name="Muselet D."/>
            <person name="Magdelenat G."/>
            <person name="Pateau E."/>
            <person name="Petit E."/>
            <person name="Sirvain-Trukniewicz P."/>
            <person name="Trybou A."/>
            <person name="Vega-Czarny N."/>
            <person name="Bataille E."/>
            <person name="Bluet E."/>
            <person name="Bordelais I."/>
            <person name="Dubois M."/>
            <person name="Dumont C."/>
            <person name="Guerin T."/>
            <person name="Haffray S."/>
            <person name="Hammadi R."/>
            <person name="Muanga J."/>
            <person name="Pellouin V."/>
            <person name="Robert D."/>
            <person name="Wunderle E."/>
            <person name="Gauguet G."/>
            <person name="Roy A."/>
            <person name="Sainte-Marthe L."/>
            <person name="Verdier J."/>
            <person name="Verdier-Discala C."/>
            <person name="Hillier L.W."/>
            <person name="Fulton L."/>
            <person name="McPherson J."/>
            <person name="Matsuda F."/>
            <person name="Wilson R."/>
            <person name="Scarpelli C."/>
            <person name="Gyapay G."/>
            <person name="Wincker P."/>
            <person name="Saurin W."/>
            <person name="Quetier F."/>
            <person name="Waterston R."/>
            <person name="Hood L."/>
            <person name="Weissenbach J."/>
        </authorList>
    </citation>
    <scope>NUCLEOTIDE SEQUENCE [LARGE SCALE GENOMIC DNA]</scope>
</reference>
<reference key="4">
    <citation type="journal article" date="2004" name="Genome Res.">
        <title>The status, quality, and expansion of the NIH full-length cDNA project: the Mammalian Gene Collection (MGC).</title>
        <authorList>
            <consortium name="The MGC Project Team"/>
        </authorList>
    </citation>
    <scope>NUCLEOTIDE SEQUENCE [LARGE SCALE MRNA]</scope>
</reference>
<reference key="5">
    <citation type="journal article" date="2002" name="Mol. Endocrinol.">
        <title>Evolution of glycoprotein hormone subunit genes in bilateral metazoa: identification of two novel human glycoprotein hormone subunit family genes, GPA2 and GPB5.</title>
        <authorList>
            <person name="Hsu S.Y."/>
            <person name="Nakabayashi K."/>
            <person name="Bhalla A."/>
        </authorList>
    </citation>
    <scope>TISSUE SPECIFICITY</scope>
</reference>
<reference key="6">
    <citation type="journal article" date="2006" name="Mol. Endocrinol.">
        <title>A glycoprotein hormone expressed in corticotrophs exhibits unique binding properties on thyroid-stimulating hormone receptor.</title>
        <authorList>
            <person name="Okada S.L."/>
            <person name="Ellsworth J.L."/>
            <person name="Durnam D.M."/>
            <person name="Haugen H.S."/>
            <person name="Holloway J.L."/>
            <person name="Kelley M.L."/>
            <person name="Lewis K.E."/>
            <person name="Ren H."/>
            <person name="Sheppard P.O."/>
            <person name="Storey H.M."/>
            <person name="Waggie K.S."/>
            <person name="Wolf A.C."/>
            <person name="Yao L.Y."/>
            <person name="Webster P.J."/>
        </authorList>
    </citation>
    <scope>FUNCTION</scope>
    <scope>TISSUE SPECIFICITY</scope>
</reference>
<proteinExistence type="evidence at protein level"/>
<evidence type="ECO:0000255" key="1"/>
<evidence type="ECO:0000269" key="2">
    <source>
    </source>
</evidence>
<evidence type="ECO:0000269" key="3">
    <source>
    </source>
</evidence>
<evidence type="ECO:0000269" key="4">
    <source>
    </source>
</evidence>
<evidence type="ECO:0000305" key="5"/>
<name>GPHB5_HUMAN</name>
<comment type="function">
    <text evidence="2 4">Functions as a heterodimeric glycoprotein hormone with GPHA2 able to bind and activate the thyroid-stimulating hormone receptor (TSHR), leading to increased cAMP production. Plays a central role in controlling thyroid cell metabolism.</text>
</comment>
<comment type="subunit">
    <text evidence="2">Heterodimer with GPHA2; this heterodimer interacts with thyroid-stimulating hormone receptor (TSHR), and hence stimulates cAMP production.</text>
</comment>
<comment type="interaction">
    <interactant intactId="EBI-11659720">
        <id>Q86YW7</id>
    </interactant>
    <interactant intactId="EBI-12160437">
        <id>A8MTA8-2</id>
        <label>CIMIP2B</label>
    </interactant>
    <organismsDiffer>false</organismsDiffer>
    <experiments>3</experiments>
</comment>
<comment type="interaction">
    <interactant intactId="EBI-11659720">
        <id>Q86YW7</id>
    </interactant>
    <interactant intactId="EBI-17973325">
        <id>P60508</id>
        <label>ERVFRD-1</label>
    </interactant>
    <organismsDiffer>false</organismsDiffer>
    <experiments>3</experiments>
</comment>
<comment type="interaction">
    <interactant intactId="EBI-11659720">
        <id>Q86YW7</id>
    </interactant>
    <interactant intactId="EBI-11659696">
        <id>Q96T91</id>
        <label>GPHA2</label>
    </interactant>
    <organismsDiffer>false</organismsDiffer>
    <experiments>3</experiments>
</comment>
<comment type="interaction">
    <interactant intactId="EBI-11659720">
        <id>Q86YW7</id>
    </interactant>
    <interactant intactId="EBI-10171774">
        <id>P60410</id>
        <label>KRTAP10-8</label>
    </interactant>
    <organismsDiffer>false</organismsDiffer>
    <experiments>3</experiments>
</comment>
<comment type="interaction">
    <interactant intactId="EBI-11659720">
        <id>Q86YW7</id>
    </interactant>
    <interactant intactId="EBI-17280858">
        <id>Q8WWF3</id>
        <label>SSMEM1</label>
    </interactant>
    <organismsDiffer>false</organismsDiffer>
    <experiments>3</experiments>
</comment>
<comment type="interaction">
    <interactant intactId="EBI-11659720">
        <id>Q86YW7</id>
    </interactant>
    <interactant intactId="EBI-19027521">
        <id>Q8N6K0</id>
        <label>TEX29</label>
    </interactant>
    <organismsDiffer>false</organismsDiffer>
    <experiments>3</experiments>
</comment>
<comment type="interaction">
    <interactant intactId="EBI-11659720">
        <id>Q86YW7</id>
    </interactant>
    <interactant intactId="EBI-1045825">
        <id>P55061</id>
        <label>TMBIM6</label>
    </interactant>
    <organismsDiffer>false</organismsDiffer>
    <experiments>3</experiments>
</comment>
<comment type="interaction">
    <interactant intactId="EBI-11659720">
        <id>Q86YW7</id>
    </interactant>
    <interactant intactId="EBI-11724423">
        <id>Q7Z7N9</id>
        <label>TMEM179B</label>
    </interactant>
    <organismsDiffer>false</organismsDiffer>
    <experiments>3</experiments>
</comment>
<comment type="subcellular location">
    <subcellularLocation>
        <location>Secreted</location>
    </subcellularLocation>
</comment>
<comment type="tissue specificity">
    <text evidence="3 4">Highly expressed in brain and at low levels in pituitary. Also found in retina, testis and skin but not in pancreas, parotid, kidney, stomach, liver, colon, small intestine, thyroid, brain or adrenal gland. In pituitary, colocalizes with ACTH, suggesting that it is located in corticotrophs.</text>
</comment>
<comment type="PTM">
    <text evidence="2">N-glycosylated.</text>
</comment>
<comment type="similarity">
    <text evidence="5">Belongs to the glycoprotein hormones subunit beta family.</text>
</comment>
<gene>
    <name type="primary">GPHB5</name>
    <name type="synonym">GPB5</name>
    <name type="synonym">ZLUT1</name>
</gene>
<organism>
    <name type="scientific">Homo sapiens</name>
    <name type="common">Human</name>
    <dbReference type="NCBI Taxonomy" id="9606"/>
    <lineage>
        <taxon>Eukaryota</taxon>
        <taxon>Metazoa</taxon>
        <taxon>Chordata</taxon>
        <taxon>Craniata</taxon>
        <taxon>Vertebrata</taxon>
        <taxon>Euteleostomi</taxon>
        <taxon>Mammalia</taxon>
        <taxon>Eutheria</taxon>
        <taxon>Euarchontoglires</taxon>
        <taxon>Primates</taxon>
        <taxon>Haplorrhini</taxon>
        <taxon>Catarrhini</taxon>
        <taxon>Hominidae</taxon>
        <taxon>Homo</taxon>
    </lineage>
</organism>
<feature type="signal peptide" evidence="1">
    <location>
        <begin position="1"/>
        <end position="24"/>
    </location>
</feature>
<feature type="chain" id="PRO_0000011761" description="Glycoprotein hormone beta-5">
    <location>
        <begin position="25"/>
        <end position="130"/>
    </location>
</feature>
<feature type="glycosylation site" description="N-linked (GlcNAc...) asparagine" evidence="1">
    <location>
        <position position="87"/>
    </location>
</feature>
<feature type="disulfide bond" evidence="1">
    <location>
        <begin position="36"/>
        <end position="84"/>
    </location>
</feature>
<feature type="disulfide bond" evidence="1">
    <location>
        <begin position="50"/>
        <end position="99"/>
    </location>
</feature>
<feature type="disulfide bond" evidence="1">
    <location>
        <begin position="60"/>
        <end position="115"/>
    </location>
</feature>
<feature type="disulfide bond" evidence="1">
    <location>
        <begin position="64"/>
        <end position="117"/>
    </location>
</feature>
<feature type="disulfide bond" evidence="1">
    <location>
        <begin position="120"/>
        <end position="127"/>
    </location>
</feature>
<feature type="sequence conflict" description="In Ref. 1; AAM53261 and 4; AAH69113." evidence="5" ref="1 4">
    <original>E</original>
    <variation>Q</variation>
    <location>
        <position position="68"/>
    </location>
</feature>
<feature type="sequence conflict" description="In Ref. 1; AAM53261." evidence="5" ref="1">
    <original>AIRCDCGACST</original>
    <variation>PSAVTAEPAPL</variation>
    <location>
        <begin position="112"/>
        <end position="122"/>
    </location>
</feature>